<comment type="function">
    <text evidence="5 6 7 8">Involved in activation of the ribosome quality control (RQC) pathway, a pathway that degrades nascent peptide chains during problematic translation (PubMed:28223409, PubMed:28757607, PubMed:32203490, PubMed:36627279). Specifically recognizes and binds RPS20/uS10 ubiquitinated by HEL2, promoting recruitment of the RQT (ribosome quality control trigger) complex on stalled ribosomes, followed by disassembly of stalled ribosomes (PubMed:28757607, PubMed:36627279).</text>
</comment>
<comment type="subunit">
    <text evidence="5 6 7">Component of the RQT (ribosome quality control trigger) complex, composed of SLH1, CUE3, and RQT4 (PubMed:28757607, PubMed:32203490). Interacts with ubiquitin; the interaction is direct (PubMed:28757607). Interacts with SLH1 (PubMed:28757607). Interacts with RQT4 (PubMed:28223409, PubMed:28757607). Interacts with HEL2 (PubMed:28757607). Associates with translating ribosomes (PubMed:28223409, PubMed:28757607).</text>
</comment>
<comment type="interaction">
    <interactant intactId="EBI-23916">
        <id>P53137</id>
    </interactant>
    <interactant intactId="EBI-26366">
        <id>P36119</id>
        <label>RQT4</label>
    </interactant>
    <organismsDiffer>false</organismsDiffer>
    <experiments>2</experiments>
</comment>
<comment type="subcellular location">
    <subcellularLocation>
        <location evidence="3">Cytoplasm</location>
    </subcellularLocation>
</comment>
<comment type="domain">
    <text evidence="8">The CUE domain specifically binds RPS20/uS10 ubiquitinated by HEL2.</text>
</comment>
<comment type="disruption phenotype">
    <text evidence="5 6">Defective activation of the ribosome quality control (RQC) pathway (PubMed:28757607). Mildly defective ribosome stalling induced by RNA arrest sequences (PubMed:28223409). Sensitive to anisomycin (stalls ribosomes in the rotated state) (PubMed:28757607).</text>
</comment>
<comment type="miscellaneous">
    <text evidence="4">Present with 6300 molecules/cell in log phase SD medium.</text>
</comment>
<feature type="chain" id="PRO_0000202749" description="RQC trigger complex subunit CUE3">
    <location>
        <begin position="1"/>
        <end position="624"/>
    </location>
</feature>
<feature type="domain" description="CUE" evidence="1">
    <location>
        <begin position="316"/>
        <end position="359"/>
    </location>
</feature>
<feature type="region of interest" description="Disordered" evidence="2">
    <location>
        <begin position="366"/>
        <end position="390"/>
    </location>
</feature>
<feature type="region of interest" description="Disordered" evidence="2">
    <location>
        <begin position="435"/>
        <end position="469"/>
    </location>
</feature>
<feature type="region of interest" description="Disordered" evidence="2">
    <location>
        <begin position="546"/>
        <end position="624"/>
    </location>
</feature>
<feature type="compositionally biased region" description="Basic and acidic residues" evidence="2">
    <location>
        <begin position="443"/>
        <end position="455"/>
    </location>
</feature>
<feature type="compositionally biased region" description="Basic and acidic residues" evidence="2">
    <location>
        <begin position="568"/>
        <end position="589"/>
    </location>
</feature>
<feature type="compositionally biased region" description="Basic residues" evidence="2">
    <location>
        <begin position="590"/>
        <end position="617"/>
    </location>
</feature>
<feature type="modified residue" description="Phosphoserine" evidence="10">
    <location>
        <position position="377"/>
    </location>
</feature>
<feature type="mutagenesis site" description="Abolishes ubiquitin binding. Defective activation of the ribosome quality control (RQC) pathway." evidence="6">
    <original>FPQFSKYQLSQTLL</original>
    <variation>AAQFSKYQLSQTAA</variation>
    <location>
        <begin position="328"/>
        <end position="341"/>
    </location>
</feature>
<sequence>MLSRYNRVIEINGGNADISLPIVKFPPFKLRAQLIEKDPVVWLHLIETYVTYFEYLMQGANVELLDESTLDHLRLFLRTYLHEIADEEGKLLSLGINHDVSEQLYLLKGWIFSLIKKCGLLHLQIFGDSLWNLIKVYVRRNPDSIRGLIDGSLKPRINTQRVQLDKSYQVQQHLKQLIESGKFKRIDLRCVEDLLSAKSMQPNKFAENFFTANWIEILEALWAKGQGRGHKEARELIIISLFSVSADRLLKITKELGISNFETLALYPLLGTMLINEGVHKRLPDLKSKLLFLNLGGLSMDEGDHMSYPTSSGTEVNEEQLSALMELFPQFSKYQLSQTLLAYDNNIELVTNKIFEDPTIIEAFSREPAEEEVEPVSDGDNASFTEELSILDRGDSSKNKELDKKIISEGVPDELRNKTLTRALKLLYEADEDERDDTYDEADVNRSDPSKRIGLQEDEESYDTKDDSNEVRQDHNYHIVEAYLWNLLKEDPKLFERSKRGTKVRKTMKEMTSWSDEKIEGWCRMLERSPTRARLLEKKFMFKGNSKTGKTSYVHNRDSQNDGNVVKEQAKQKKSENIKKHEPQSTEQKKRQHAKNEKRKGARANHNRKKGHDKKLARAGNNAI</sequence>
<organism>
    <name type="scientific">Saccharomyces cerevisiae (strain ATCC 204508 / S288c)</name>
    <name type="common">Baker's yeast</name>
    <dbReference type="NCBI Taxonomy" id="559292"/>
    <lineage>
        <taxon>Eukaryota</taxon>
        <taxon>Fungi</taxon>
        <taxon>Dikarya</taxon>
        <taxon>Ascomycota</taxon>
        <taxon>Saccharomycotina</taxon>
        <taxon>Saccharomycetes</taxon>
        <taxon>Saccharomycetales</taxon>
        <taxon>Saccharomycetaceae</taxon>
        <taxon>Saccharomyces</taxon>
    </lineage>
</organism>
<name>CUE3_YEAST</name>
<keyword id="KW-0002">3D-structure</keyword>
<keyword id="KW-0963">Cytoplasm</keyword>
<keyword id="KW-0597">Phosphoprotein</keyword>
<keyword id="KW-1185">Reference proteome</keyword>
<reference key="1">
    <citation type="journal article" date="1997" name="Yeast">
        <title>The genes encoding the transcription factor yTAFII60, the G4p1 protein and a putative glucose transporter are contained in a 12.3 kb DNA fragment on the left arm of Saccharomyces cerevisiae chromosome VII.</title>
        <authorList>
            <person name="Paoluzi S."/>
            <person name="Minenkova O."/>
            <person name="Castagnoli L."/>
        </authorList>
    </citation>
    <scope>NUCLEOTIDE SEQUENCE [GENOMIC DNA]</scope>
</reference>
<reference key="2">
    <citation type="journal article" date="1997" name="Nature">
        <title>The nucleotide sequence of Saccharomyces cerevisiae chromosome VII.</title>
        <authorList>
            <person name="Tettelin H."/>
            <person name="Agostoni-Carbone M.L."/>
            <person name="Albermann K."/>
            <person name="Albers M."/>
            <person name="Arroyo J."/>
            <person name="Backes U."/>
            <person name="Barreiros T."/>
            <person name="Bertani I."/>
            <person name="Bjourson A.J."/>
            <person name="Brueckner M."/>
            <person name="Bruschi C.V."/>
            <person name="Carignani G."/>
            <person name="Castagnoli L."/>
            <person name="Cerdan E."/>
            <person name="Clemente M.L."/>
            <person name="Coblenz A."/>
            <person name="Coglievina M."/>
            <person name="Coissac E."/>
            <person name="Defoor E."/>
            <person name="Del Bino S."/>
            <person name="Delius H."/>
            <person name="Delneri D."/>
            <person name="de Wergifosse P."/>
            <person name="Dujon B."/>
            <person name="Durand P."/>
            <person name="Entian K.-D."/>
            <person name="Eraso P."/>
            <person name="Escribano V."/>
            <person name="Fabiani L."/>
            <person name="Fartmann B."/>
            <person name="Feroli F."/>
            <person name="Feuermann M."/>
            <person name="Frontali L."/>
            <person name="Garcia-Gonzalez M."/>
            <person name="Garcia-Saez M.I."/>
            <person name="Goffeau A."/>
            <person name="Guerreiro P."/>
            <person name="Hani J."/>
            <person name="Hansen M."/>
            <person name="Hebling U."/>
            <person name="Hernandez K."/>
            <person name="Heumann K."/>
            <person name="Hilger F."/>
            <person name="Hofmann B."/>
            <person name="Indge K.J."/>
            <person name="James C.M."/>
            <person name="Klima R."/>
            <person name="Koetter P."/>
            <person name="Kramer B."/>
            <person name="Kramer W."/>
            <person name="Lauquin G."/>
            <person name="Leuther H."/>
            <person name="Louis E.J."/>
            <person name="Maillier E."/>
            <person name="Marconi A."/>
            <person name="Martegani E."/>
            <person name="Mazon M.J."/>
            <person name="Mazzoni C."/>
            <person name="McReynolds A.D.K."/>
            <person name="Melchioretto P."/>
            <person name="Mewes H.-W."/>
            <person name="Minenkova O."/>
            <person name="Mueller-Auer S."/>
            <person name="Nawrocki A."/>
            <person name="Netter P."/>
            <person name="Neu R."/>
            <person name="Nombela C."/>
            <person name="Oliver S.G."/>
            <person name="Panzeri L."/>
            <person name="Paoluzi S."/>
            <person name="Plevani P."/>
            <person name="Portetelle D."/>
            <person name="Portillo F."/>
            <person name="Potier S."/>
            <person name="Purnelle B."/>
            <person name="Rieger M."/>
            <person name="Riles L."/>
            <person name="Rinaldi T."/>
            <person name="Robben J."/>
            <person name="Rodrigues-Pousada C."/>
            <person name="Rodriguez-Belmonte E."/>
            <person name="Rodriguez-Torres A.M."/>
            <person name="Rose M."/>
            <person name="Ruzzi M."/>
            <person name="Saliola M."/>
            <person name="Sanchez-Perez M."/>
            <person name="Schaefer B."/>
            <person name="Schaefer M."/>
            <person name="Scharfe M."/>
            <person name="Schmidheini T."/>
            <person name="Schreer A."/>
            <person name="Skala J."/>
            <person name="Souciet J.-L."/>
            <person name="Steensma H.Y."/>
            <person name="Talla E."/>
            <person name="Thierry A."/>
            <person name="Vandenbol M."/>
            <person name="van der Aart Q.J.M."/>
            <person name="Van Dyck L."/>
            <person name="Vanoni M."/>
            <person name="Verhasselt P."/>
            <person name="Voet M."/>
            <person name="Volckaert G."/>
            <person name="Wambutt R."/>
            <person name="Watson M.D."/>
            <person name="Weber N."/>
            <person name="Wedler E."/>
            <person name="Wedler H."/>
            <person name="Wipfli P."/>
            <person name="Wolf K."/>
            <person name="Wright L.F."/>
            <person name="Zaccaria P."/>
            <person name="Zimmermann M."/>
            <person name="Zollner A."/>
            <person name="Kleine K."/>
        </authorList>
    </citation>
    <scope>NUCLEOTIDE SEQUENCE [LARGE SCALE GENOMIC DNA]</scope>
    <source>
        <strain>ATCC 204508 / S288c</strain>
    </source>
</reference>
<reference key="3">
    <citation type="journal article" date="2014" name="G3 (Bethesda)">
        <title>The reference genome sequence of Saccharomyces cerevisiae: Then and now.</title>
        <authorList>
            <person name="Engel S.R."/>
            <person name="Dietrich F.S."/>
            <person name="Fisk D.G."/>
            <person name="Binkley G."/>
            <person name="Balakrishnan R."/>
            <person name="Costanzo M.C."/>
            <person name="Dwight S.S."/>
            <person name="Hitz B.C."/>
            <person name="Karra K."/>
            <person name="Nash R.S."/>
            <person name="Weng S."/>
            <person name="Wong E.D."/>
            <person name="Lloyd P."/>
            <person name="Skrzypek M.S."/>
            <person name="Miyasato S.R."/>
            <person name="Simison M."/>
            <person name="Cherry J.M."/>
        </authorList>
    </citation>
    <scope>GENOME REANNOTATION</scope>
    <source>
        <strain>ATCC 204508 / S288c</strain>
    </source>
</reference>
<reference key="4">
    <citation type="journal article" date="2003" name="Nature">
        <title>Global analysis of protein localization in budding yeast.</title>
        <authorList>
            <person name="Huh W.-K."/>
            <person name="Falvo J.V."/>
            <person name="Gerke L.C."/>
            <person name="Carroll A.S."/>
            <person name="Howson R.W."/>
            <person name="Weissman J.S."/>
            <person name="O'Shea E.K."/>
        </authorList>
    </citation>
    <scope>SUBCELLULAR LOCATION [LARGE SCALE ANALYSIS]</scope>
</reference>
<reference key="5">
    <citation type="journal article" date="2003" name="Nature">
        <title>Global analysis of protein expression in yeast.</title>
        <authorList>
            <person name="Ghaemmaghami S."/>
            <person name="Huh W.-K."/>
            <person name="Bower K."/>
            <person name="Howson R.W."/>
            <person name="Belle A."/>
            <person name="Dephoure N."/>
            <person name="O'Shea E.K."/>
            <person name="Weissman J.S."/>
        </authorList>
    </citation>
    <scope>LEVEL OF PROTEIN EXPRESSION [LARGE SCALE ANALYSIS]</scope>
</reference>
<reference key="6">
    <citation type="journal article" date="2009" name="Science">
        <title>Global analysis of Cdk1 substrate phosphorylation sites provides insights into evolution.</title>
        <authorList>
            <person name="Holt L.J."/>
            <person name="Tuch B.B."/>
            <person name="Villen J."/>
            <person name="Johnson A.D."/>
            <person name="Gygi S.P."/>
            <person name="Morgan D.O."/>
        </authorList>
    </citation>
    <scope>PHOSPHORYLATION [LARGE SCALE ANALYSIS] AT SER-377</scope>
    <scope>IDENTIFICATION BY MASS SPECTROMETRY [LARGE SCALE ANALYSIS]</scope>
</reference>
<reference key="7">
    <citation type="journal article" date="2017" name="Nat. Commun.">
        <title>Ubiquitination of stalled ribosome triggers ribosome-associated quality control.</title>
        <authorList>
            <person name="Matsuo Y."/>
            <person name="Ikeuchi K."/>
            <person name="Saeki Y."/>
            <person name="Iwasaki S."/>
            <person name="Schmidt C."/>
            <person name="Udagawa T."/>
            <person name="Sato F."/>
            <person name="Tsuchiya H."/>
            <person name="Becker T."/>
            <person name="Tanaka K."/>
            <person name="Ingolia N.T."/>
            <person name="Beckmann R."/>
            <person name="Inada T."/>
        </authorList>
    </citation>
    <scope>FUNCTION</scope>
    <scope>IDENTIFICATION IN THE RQT COMPLEX</scope>
    <scope>INTERACTION WITH UBIQUITIN; SLH1; RQT4 AND HEL2</scope>
    <scope>DISRUPTION PHENOTYPE</scope>
    <scope>MUTAGENESIS OF 328-PHE--LEU-341</scope>
</reference>
<reference key="8">
    <citation type="journal article" date="2017" name="RNA">
        <title>Asc1, Hel2, and Slh1 couple translation arrest to nascent chain degradation.</title>
        <authorList>
            <person name="Sitron C.S."/>
            <person name="Park J.H."/>
            <person name="Brandman O."/>
        </authorList>
    </citation>
    <scope>FUNCTION</scope>
    <scope>INTERACTION WITH RQT4</scope>
    <scope>DISRUPTION PHENOTYPE</scope>
</reference>
<reference key="9">
    <citation type="journal article" date="2020" name="Nat. Struct. Mol. Biol.">
        <title>RQT complex dissociates ribosomes collided on endogenous RQC substrate SDD1.</title>
        <authorList>
            <person name="Matsuo Y."/>
            <person name="Tesina P."/>
            <person name="Nakajima S."/>
            <person name="Mizuno M."/>
            <person name="Endo A."/>
            <person name="Buschauer R."/>
            <person name="Cheng J."/>
            <person name="Shounai O."/>
            <person name="Ikeuchi K."/>
            <person name="Saeki Y."/>
            <person name="Becker T."/>
            <person name="Beckmann R."/>
            <person name="Inada T."/>
        </authorList>
    </citation>
    <scope>FUNCTION</scope>
    <scope>IDENTIFICATION IN THE RQT COMPLEX</scope>
</reference>
<reference key="10">
    <citation type="journal article" date="2023" name="Nat. Commun.">
        <title>Decoding of the ubiquitin code for clearance of colliding ribosomes by the RQT complex.</title>
        <authorList>
            <person name="Matsuo Y."/>
            <person name="Uchihashi T."/>
            <person name="Inada T."/>
        </authorList>
    </citation>
    <scope>FUNCTION</scope>
    <scope>DOMAIN</scope>
</reference>
<dbReference type="EMBL" id="X97644">
    <property type="protein sequence ID" value="CAA66242.1"/>
    <property type="molecule type" value="Genomic_DNA"/>
</dbReference>
<dbReference type="EMBL" id="Z72632">
    <property type="protein sequence ID" value="CAA96817.1"/>
    <property type="molecule type" value="Genomic_DNA"/>
</dbReference>
<dbReference type="EMBL" id="BK006941">
    <property type="protein sequence ID" value="DAA07998.1"/>
    <property type="molecule type" value="Genomic_DNA"/>
</dbReference>
<dbReference type="PIR" id="S64118">
    <property type="entry name" value="S64118"/>
</dbReference>
<dbReference type="RefSeq" id="NP_011405.1">
    <property type="nucleotide sequence ID" value="NM_001180975.1"/>
</dbReference>
<dbReference type="PDB" id="7ZPQ">
    <property type="method" value="EM"/>
    <property type="resolution" value="3.47 A"/>
    <property type="chains" value="CB=1-297"/>
</dbReference>
<dbReference type="PDB" id="7ZRS">
    <property type="method" value="EM"/>
    <property type="resolution" value="4.80 A"/>
    <property type="chains" value="CB=1-297"/>
</dbReference>
<dbReference type="PDB" id="7ZUW">
    <property type="method" value="EM"/>
    <property type="resolution" value="4.30 A"/>
    <property type="chains" value="CB=1-297"/>
</dbReference>
<dbReference type="PDBsum" id="7ZPQ"/>
<dbReference type="PDBsum" id="7ZRS"/>
<dbReference type="PDBsum" id="7ZUW"/>
<dbReference type="EMDB" id="EMD-14861"/>
<dbReference type="EMDB" id="EMD-14921"/>
<dbReference type="SMR" id="P53137"/>
<dbReference type="BioGRID" id="33141">
    <property type="interactions" value="124"/>
</dbReference>
<dbReference type="ComplexPortal" id="CPX-6643">
    <property type="entry name" value="RQT ribosome-associated quality control trigger complex"/>
</dbReference>
<dbReference type="DIP" id="DIP-5379N"/>
<dbReference type="FunCoup" id="P53137">
    <property type="interactions" value="39"/>
</dbReference>
<dbReference type="IntAct" id="P53137">
    <property type="interactions" value="3"/>
</dbReference>
<dbReference type="MINT" id="P53137"/>
<dbReference type="STRING" id="4932.YGL110C"/>
<dbReference type="iPTMnet" id="P53137"/>
<dbReference type="PaxDb" id="4932-YGL110C"/>
<dbReference type="PeptideAtlas" id="P53137"/>
<dbReference type="EnsemblFungi" id="YGL110C_mRNA">
    <property type="protein sequence ID" value="YGL110C"/>
    <property type="gene ID" value="YGL110C"/>
</dbReference>
<dbReference type="GeneID" id="852768"/>
<dbReference type="KEGG" id="sce:YGL110C"/>
<dbReference type="AGR" id="SGD:S000003078"/>
<dbReference type="SGD" id="S000003078">
    <property type="gene designation" value="CUE3"/>
</dbReference>
<dbReference type="VEuPathDB" id="FungiDB:YGL110C"/>
<dbReference type="eggNOG" id="ENOG502RV3A">
    <property type="taxonomic scope" value="Eukaryota"/>
</dbReference>
<dbReference type="HOGENOM" id="CLU_030292_0_0_1"/>
<dbReference type="InParanoid" id="P53137"/>
<dbReference type="OMA" id="EGWARMI"/>
<dbReference type="OrthoDB" id="5577209at2759"/>
<dbReference type="BioCyc" id="YEAST:G3O-30608-MONOMER"/>
<dbReference type="BioGRID-ORCS" id="852768">
    <property type="hits" value="0 hits in 10 CRISPR screens"/>
</dbReference>
<dbReference type="PRO" id="PR:P53137"/>
<dbReference type="Proteomes" id="UP000002311">
    <property type="component" value="Chromosome VII"/>
</dbReference>
<dbReference type="RNAct" id="P53137">
    <property type="molecule type" value="protein"/>
</dbReference>
<dbReference type="GO" id="GO:0005737">
    <property type="term" value="C:cytoplasm"/>
    <property type="evidence" value="ECO:0007005"/>
    <property type="project" value="SGD"/>
</dbReference>
<dbReference type="GO" id="GO:0022626">
    <property type="term" value="C:cytosolic ribosome"/>
    <property type="evidence" value="ECO:0000314"/>
    <property type="project" value="UniProt"/>
</dbReference>
<dbReference type="GO" id="GO:0070530">
    <property type="term" value="F:K63-linked polyubiquitin modification-dependent protein binding"/>
    <property type="evidence" value="ECO:0000314"/>
    <property type="project" value="UniProtKB"/>
</dbReference>
<dbReference type="GO" id="GO:0043130">
    <property type="term" value="F:ubiquitin binding"/>
    <property type="evidence" value="ECO:0000314"/>
    <property type="project" value="SGD"/>
</dbReference>
<dbReference type="GO" id="GO:0072344">
    <property type="term" value="P:rescue of stalled ribosome"/>
    <property type="evidence" value="ECO:0000314"/>
    <property type="project" value="UniProtKB"/>
</dbReference>
<dbReference type="GO" id="GO:0032790">
    <property type="term" value="P:ribosome disassembly"/>
    <property type="evidence" value="ECO:0000314"/>
    <property type="project" value="UniProtKB"/>
</dbReference>
<dbReference type="GO" id="GO:1990116">
    <property type="term" value="P:ribosome-associated ubiquitin-dependent protein catabolic process"/>
    <property type="evidence" value="ECO:0000315"/>
    <property type="project" value="UniProtKB"/>
</dbReference>
<dbReference type="CDD" id="cd14373">
    <property type="entry name" value="CUE_Cue3p_like"/>
    <property type="match status" value="1"/>
</dbReference>
<dbReference type="InterPro" id="IPR052586">
    <property type="entry name" value="ASCC2"/>
</dbReference>
<dbReference type="InterPro" id="IPR003892">
    <property type="entry name" value="CUE"/>
</dbReference>
<dbReference type="InterPro" id="IPR041808">
    <property type="entry name" value="Cue3_CUE"/>
</dbReference>
<dbReference type="PANTHER" id="PTHR21494:SF0">
    <property type="entry name" value="ACTIVATING SIGNAL COINTEGRATOR 1 COMPLEX SUBUNIT 2"/>
    <property type="match status" value="1"/>
</dbReference>
<dbReference type="PANTHER" id="PTHR21494">
    <property type="entry name" value="ACTIVATING SIGNAL COINTEGRATOR 1 COMPLEX SUBUNIT 2 ASC-1 COMPLEX SUBUNIT P100"/>
    <property type="match status" value="1"/>
</dbReference>
<dbReference type="Pfam" id="PF02845">
    <property type="entry name" value="CUE"/>
    <property type="match status" value="1"/>
</dbReference>
<dbReference type="SMART" id="SM00546">
    <property type="entry name" value="CUE"/>
    <property type="match status" value="1"/>
</dbReference>
<dbReference type="PROSITE" id="PS51140">
    <property type="entry name" value="CUE"/>
    <property type="match status" value="1"/>
</dbReference>
<protein>
    <recommendedName>
        <fullName evidence="9">RQC trigger complex subunit CUE3</fullName>
    </recommendedName>
    <alternativeName>
        <fullName>CUE domain-containing protein 3</fullName>
    </alternativeName>
    <alternativeName>
        <fullName>Coupling of ubiquitin conjugation to ER degradation protein 3</fullName>
    </alternativeName>
</protein>
<proteinExistence type="evidence at protein level"/>
<accession>P53137</accession>
<accession>D6VU37</accession>
<evidence type="ECO:0000255" key="1">
    <source>
        <dbReference type="PROSITE-ProRule" id="PRU00468"/>
    </source>
</evidence>
<evidence type="ECO:0000256" key="2">
    <source>
        <dbReference type="SAM" id="MobiDB-lite"/>
    </source>
</evidence>
<evidence type="ECO:0000269" key="3">
    <source>
    </source>
</evidence>
<evidence type="ECO:0000269" key="4">
    <source>
    </source>
</evidence>
<evidence type="ECO:0000269" key="5">
    <source>
    </source>
</evidence>
<evidence type="ECO:0000269" key="6">
    <source>
    </source>
</evidence>
<evidence type="ECO:0000269" key="7">
    <source>
    </source>
</evidence>
<evidence type="ECO:0000269" key="8">
    <source>
    </source>
</evidence>
<evidence type="ECO:0000303" key="9">
    <source>
    </source>
</evidence>
<evidence type="ECO:0007744" key="10">
    <source>
    </source>
</evidence>
<gene>
    <name type="primary">CUE3</name>
    <name evidence="9" type="synonym">RQT3</name>
    <name type="ordered locus">YGL110C</name>
    <name type="ORF">G3060</name>
</gene>